<organism>
    <name type="scientific">Rabies virus (strain CVS-11)</name>
    <name type="common">RABV</name>
    <dbReference type="NCBI Taxonomy" id="11294"/>
    <lineage>
        <taxon>Viruses</taxon>
        <taxon>Riboviria</taxon>
        <taxon>Orthornavirae</taxon>
        <taxon>Negarnaviricota</taxon>
        <taxon>Haploviricotina</taxon>
        <taxon>Monjiviricetes</taxon>
        <taxon>Mononegavirales</taxon>
        <taxon>Rhabdoviridae</taxon>
        <taxon>Alpharhabdovirinae</taxon>
        <taxon>Lyssavirus</taxon>
        <taxon>Lyssavirus rabies</taxon>
    </lineage>
</organism>
<name>PHOSP_RABVC</name>
<keyword id="KW-0002">3D-structure</keyword>
<keyword id="KW-0024">Alternative initiation</keyword>
<keyword id="KW-0143">Chaperone</keyword>
<keyword id="KW-1176">Cytoplasmic inwards viral transport</keyword>
<keyword id="KW-1035">Host cytoplasm</keyword>
<keyword id="KW-1048">Host nucleus</keyword>
<keyword id="KW-0945">Host-virus interaction</keyword>
<keyword id="KW-1090">Inhibition of host innate immune response by virus</keyword>
<keyword id="KW-1114">Inhibition of host interferon signaling pathway by virus</keyword>
<keyword id="KW-1105">Inhibition of host STAT1 by virus</keyword>
<keyword id="KW-1106">Inhibition of host STAT2 by virus</keyword>
<keyword id="KW-1223">Inhibition of host TBK1 by virus</keyword>
<keyword id="KW-1225">Inhibition of host TLR pathway by virus</keyword>
<keyword id="KW-0922">Interferon antiviral system evasion</keyword>
<keyword id="KW-1177">Microtubular inwards viral transport</keyword>
<keyword id="KW-0597">Phosphoprotein</keyword>
<keyword id="KW-0899">Viral immunoevasion</keyword>
<keyword id="KW-0693">Viral RNA replication</keyword>
<keyword id="KW-0946">Virion</keyword>
<keyword id="KW-1160">Virus entry into host cell</keyword>
<proteinExistence type="evidence at protein level"/>
<feature type="chain" id="PRO_0000222828" description="Phosphoprotein">
    <location>
        <begin position="1"/>
        <end position="297"/>
    </location>
</feature>
<feature type="region of interest" description="Disordered" evidence="3">
    <location>
        <begin position="132"/>
        <end position="177"/>
    </location>
</feature>
<feature type="region of interest" description="DYNLL1 and DYNLL2 binding">
    <location>
        <begin position="138"/>
        <end position="172"/>
    </location>
</feature>
<feature type="short sequence motif" description="Nuclear export signal">
    <location>
        <begin position="49"/>
        <end position="58"/>
    </location>
</feature>
<feature type="short sequence motif" description="Nuclear localization signal">
    <location>
        <begin position="211"/>
        <end position="214"/>
    </location>
</feature>
<feature type="compositionally biased region" description="Basic and acidic residues" evidence="3">
    <location>
        <begin position="139"/>
        <end position="157"/>
    </location>
</feature>
<feature type="compositionally biased region" description="Polar residues" evidence="3">
    <location>
        <begin position="158"/>
        <end position="169"/>
    </location>
</feature>
<feature type="modified residue" description="Phosphoserine; by host" evidence="4">
    <location>
        <position position="63"/>
    </location>
</feature>
<feature type="modified residue" description="Phosphoserine; by host" evidence="4">
    <location>
        <position position="64"/>
    </location>
</feature>
<feature type="modified residue" description="Phosphoserine; by host PKC" evidence="4">
    <location>
        <position position="162"/>
    </location>
</feature>
<feature type="modified residue" description="Phosphoserine; by host PKC" evidence="4">
    <location>
        <position position="210"/>
    </location>
</feature>
<feature type="modified residue" description="Phosphoserine; by host PKC" evidence="4">
    <location>
        <position position="271"/>
    </location>
</feature>
<feature type="splice variant" id="VSP_026783" description="In isoform P5." evidence="10">
    <location>
        <begin position="1"/>
        <end position="82"/>
    </location>
</feature>
<feature type="splice variant" id="VSP_026784" description="In isoform P4." evidence="10">
    <location>
        <begin position="1"/>
        <end position="68"/>
    </location>
</feature>
<feature type="splice variant" id="VSP_026785" description="In isoform P3." evidence="10">
    <location>
        <begin position="1"/>
        <end position="52"/>
    </location>
</feature>
<feature type="splice variant" id="VSP_026786" description="In isoform P2." evidence="10">
    <location>
        <begin position="1"/>
        <end position="19"/>
    </location>
</feature>
<feature type="sequence variant" description="In strain: CVS.">
    <original>V</original>
    <variation>I</variation>
    <location>
        <position position="122"/>
    </location>
</feature>
<feature type="helix" evidence="12">
    <location>
        <begin position="8"/>
        <end position="11"/>
    </location>
</feature>
<feature type="helix" evidence="12">
    <location>
        <begin position="21"/>
        <end position="38"/>
    </location>
</feature>
<feature type="helix" evidence="11">
    <location>
        <begin position="190"/>
        <end position="207"/>
    </location>
</feature>
<feature type="turn" evidence="11">
    <location>
        <begin position="208"/>
        <end position="210"/>
    </location>
</feature>
<feature type="strand" evidence="11">
    <location>
        <begin position="213"/>
        <end position="217"/>
    </location>
</feature>
<feature type="strand" evidence="11">
    <location>
        <begin position="222"/>
        <end position="225"/>
    </location>
</feature>
<feature type="helix" evidence="11">
    <location>
        <begin position="227"/>
        <end position="230"/>
    </location>
</feature>
<feature type="helix" evidence="11">
    <location>
        <begin position="234"/>
        <end position="241"/>
    </location>
</feature>
<feature type="helix" evidence="11">
    <location>
        <begin position="247"/>
        <end position="252"/>
    </location>
</feature>
<feature type="helix" evidence="11">
    <location>
        <begin position="259"/>
        <end position="270"/>
    </location>
</feature>
<feature type="helix" evidence="11">
    <location>
        <begin position="272"/>
        <end position="277"/>
    </location>
</feature>
<feature type="helix" evidence="11">
    <location>
        <begin position="280"/>
        <end position="292"/>
    </location>
</feature>
<sequence length="297" mass="33616">MSKIFVNPSAIRAGLADLEMAEETVDLINRNIEDNQAHLQGEPIEVDNLPEDMKRLHLDDEKSSNLGEMVRVGEGKYREDFQMDEGEDPNLLFQSYLDNVGVQIVRQMRSGERFLKIWSQTVEEIVSYVTVNFPNPPRRSSEDKSTQTTGRELKKETTSAFSQRESQPSKARMVAQVAPGPPALEWSATNEEDDLSVEAEIAHQIAESFSKKYKFPSRSSGIFLYNFEQLKMNLDDIVKEAKNVPGVTRLAHDGSKIPLRCVLGWVALANSKKFQLLVEADKLSKIMQDDLNRYTSC</sequence>
<organismHost>
    <name type="scientific">Homo sapiens</name>
    <name type="common">Human</name>
    <dbReference type="NCBI Taxonomy" id="9606"/>
</organismHost>
<organismHost>
    <name type="scientific">Mammalia</name>
    <dbReference type="NCBI Taxonomy" id="40674"/>
</organismHost>
<accession>P22363</accession>
<accession>Q85414</accession>
<dbReference type="EMBL" id="X55727">
    <property type="protein sequence ID" value="CAA39258.1"/>
    <property type="molecule type" value="Genomic_RNA"/>
</dbReference>
<dbReference type="EMBL" id="X57783">
    <property type="protein sequence ID" value="CAA40929.1"/>
    <property type="molecule type" value="Genomic_RNA"/>
</dbReference>
<dbReference type="PIR" id="S13706">
    <property type="entry name" value="S13706"/>
</dbReference>
<dbReference type="PDB" id="1VYI">
    <property type="method" value="X-ray"/>
    <property type="resolution" value="1.50 A"/>
    <property type="chains" value="A=186-297"/>
</dbReference>
<dbReference type="PDB" id="8B8V">
    <property type="method" value="X-ray"/>
    <property type="resolution" value="2.30 A"/>
    <property type="chains" value="B=1-68"/>
</dbReference>
<dbReference type="PDBsum" id="1VYI"/>
<dbReference type="PDBsum" id="8B8V"/>
<dbReference type="SMR" id="P22363"/>
<dbReference type="ELM" id="P22363"/>
<dbReference type="iPTMnet" id="P22363"/>
<dbReference type="CD-CODE" id="886620B0">
    <property type="entry name" value="Negri body"/>
</dbReference>
<dbReference type="EvolutionaryTrace" id="P22363"/>
<dbReference type="GO" id="GO:0043657">
    <property type="term" value="C:host cell"/>
    <property type="evidence" value="ECO:0007669"/>
    <property type="project" value="GOC"/>
</dbReference>
<dbReference type="GO" id="GO:0030430">
    <property type="term" value="C:host cell cytoplasm"/>
    <property type="evidence" value="ECO:0007669"/>
    <property type="project" value="UniProtKB-SubCell"/>
</dbReference>
<dbReference type="GO" id="GO:0042025">
    <property type="term" value="C:host cell nucleus"/>
    <property type="evidence" value="ECO:0007669"/>
    <property type="project" value="UniProtKB-SubCell"/>
</dbReference>
<dbReference type="GO" id="GO:0044423">
    <property type="term" value="C:virion component"/>
    <property type="evidence" value="ECO:0007669"/>
    <property type="project" value="UniProtKB-KW"/>
</dbReference>
<dbReference type="GO" id="GO:0140693">
    <property type="term" value="F:molecular condensate scaffold activity"/>
    <property type="evidence" value="ECO:0000314"/>
    <property type="project" value="DisProt"/>
</dbReference>
<dbReference type="GO" id="GO:0003968">
    <property type="term" value="F:RNA-directed RNA polymerase activity"/>
    <property type="evidence" value="ECO:0007669"/>
    <property type="project" value="InterPro"/>
</dbReference>
<dbReference type="GO" id="GO:0075521">
    <property type="term" value="P:microtubule-dependent intracellular transport of viral material towards nucleus"/>
    <property type="evidence" value="ECO:0007669"/>
    <property type="project" value="UniProtKB-KW"/>
</dbReference>
<dbReference type="GO" id="GO:0046718">
    <property type="term" value="P:symbiont entry into host cell"/>
    <property type="evidence" value="ECO:0007669"/>
    <property type="project" value="UniProtKB-KW"/>
</dbReference>
<dbReference type="GO" id="GO:0039723">
    <property type="term" value="P:symbiont-mediated suppression of host cytoplasmic pattern recognition receptor signaling pathway via inhibition of TBK1 activity"/>
    <property type="evidence" value="ECO:0007669"/>
    <property type="project" value="UniProtKB-KW"/>
</dbReference>
<dbReference type="GO" id="GO:0039563">
    <property type="term" value="P:symbiont-mediated suppression of host JAK-STAT cascade via inhibition of STAT1 activity"/>
    <property type="evidence" value="ECO:0007669"/>
    <property type="project" value="UniProtKB-KW"/>
</dbReference>
<dbReference type="GO" id="GO:0039564">
    <property type="term" value="P:symbiont-mediated suppression of host JAK-STAT cascade via inhibition of STAT2 activity"/>
    <property type="evidence" value="ECO:0007669"/>
    <property type="project" value="UniProtKB-KW"/>
</dbReference>
<dbReference type="GO" id="GO:0039722">
    <property type="term" value="P:symbiont-mediated suppression of host toll-like receptor signaling pathway"/>
    <property type="evidence" value="ECO:0007669"/>
    <property type="project" value="UniProtKB-KW"/>
</dbReference>
<dbReference type="GO" id="GO:0039502">
    <property type="term" value="P:symbiont-mediated suppression of host type I interferon-mediated signaling pathway"/>
    <property type="evidence" value="ECO:0007669"/>
    <property type="project" value="UniProtKB-KW"/>
</dbReference>
<dbReference type="GO" id="GO:0019083">
    <property type="term" value="P:viral transcription"/>
    <property type="evidence" value="ECO:0007669"/>
    <property type="project" value="InterPro"/>
</dbReference>
<dbReference type="CDD" id="cd21032">
    <property type="entry name" value="RABV_P-protein-C_like"/>
    <property type="match status" value="1"/>
</dbReference>
<dbReference type="FunFam" id="1.20.120.820:FF:000001">
    <property type="entry name" value="Phosphoprotein"/>
    <property type="match status" value="1"/>
</dbReference>
<dbReference type="Gene3D" id="6.10.140.1560">
    <property type="match status" value="1"/>
</dbReference>
<dbReference type="Gene3D" id="1.20.120.820">
    <property type="entry name" value="Phosphoprotein, C-terminal domain"/>
    <property type="match status" value="1"/>
</dbReference>
<dbReference type="InterPro" id="IPR004259">
    <property type="entry name" value="PP_M1-like"/>
</dbReference>
<dbReference type="InterPro" id="IPR037199">
    <property type="entry name" value="PP_M1_C"/>
</dbReference>
<dbReference type="InterPro" id="IPR049506">
    <property type="entry name" value="RABV_P-like_C"/>
</dbReference>
<dbReference type="Pfam" id="PF03012">
    <property type="entry name" value="PP_M1"/>
    <property type="match status" value="1"/>
</dbReference>
<dbReference type="SUPFAM" id="SSF118173">
    <property type="entry name" value="Phosphoprotein M1, C-terminal domain"/>
    <property type="match status" value="1"/>
</dbReference>
<comment type="function">
    <text evidence="1 2">Non catalytic polymerase cofactor and regulatory protein that plays a role in viral transcription and replication. Stabilizes the RNA polymerase L to the N-RNA template and binds the soluble protein N, preventing it from encapsidating non-genomic RNA. Also inhibits host IFN-alpha and IFN-beta signaling by binding and retaining phosphorylated STAT1 in the cytoplasm or by inhibiting the DNA binding of STAT1 in the nucleus. Might be involved, through interaction with host dynein, in intracellular microtubule-dependent virus transport of incoming virus from the synapse toward the cell body (By similarity). Inhibits interferon induction pathways by interacting with host TBK1 and preventing the formation of dynamic cytoplasmic condensates that have liquid properties and that are essential for interferon production (By similarity).</text>
</comment>
<comment type="subunit">
    <molecule>Phosphoprotein</molecule>
    <text evidence="2 5 6 8 9">Homotrimer when phosphorylated. This trimer is stabilized by binding to the L protein. Binds soluble protein N, and ribonucleocapsid. Interacts with host DYNLL1 and DYNLL2; this interaction may play a role in intracellular microtubule-dependent virus transport of incoming virus. Interacts with host STAT1, STAT2 and PML. Interacts with host TBK1.</text>
</comment>
<comment type="subunit">
    <molecule>Isoform P3</molecule>
    <text evidence="7">Binds host PML.</text>
</comment>
<comment type="subcellular location">
    <molecule>Phosphoprotein</molecule>
    <subcellularLocation>
        <location>Virion</location>
    </subcellularLocation>
    <subcellularLocation>
        <location>Host cytoplasm</location>
    </subcellularLocation>
</comment>
<comment type="subcellular location">
    <molecule>Isoform P2</molecule>
    <subcellularLocation>
        <location>Host cytoplasm</location>
    </subcellularLocation>
</comment>
<comment type="subcellular location">
    <molecule>Isoform P3</molecule>
    <subcellularLocation>
        <location>Host nucleus</location>
    </subcellularLocation>
</comment>
<comment type="subcellular location">
    <molecule>Isoform P4</molecule>
    <subcellularLocation>
        <location>Host nucleus</location>
    </subcellularLocation>
</comment>
<comment type="subcellular location">
    <molecule>Isoform P5</molecule>
    <subcellularLocation>
        <location>Host nucleus</location>
    </subcellularLocation>
</comment>
<comment type="alternative products">
    <event type="alternative initiation"/>
    <isoform>
        <id>P22363-1</id>
        <name>P</name>
        <sequence type="displayed"/>
    </isoform>
    <isoform>
        <id>P22363-2</id>
        <name>P2</name>
        <sequence type="described" ref="VSP_026786"/>
    </isoform>
    <isoform>
        <id>P22363-3</id>
        <name>P3</name>
        <sequence type="described" ref="VSP_026785"/>
    </isoform>
    <isoform>
        <id>P22363-4</id>
        <name>P4</name>
        <sequence type="described" ref="VSP_026784"/>
    </isoform>
    <isoform>
        <id>P22363-5</id>
        <name>P5</name>
        <sequence type="described" ref="VSP_026783"/>
    </isoform>
</comment>
<comment type="PTM">
    <text evidence="1">Phosphorylated by host PKC and by an unknown kinase.</text>
</comment>
<comment type="similarity">
    <text evidence="10">Belongs to the lyssavirus protein P family.</text>
</comment>
<evidence type="ECO:0000250" key="1"/>
<evidence type="ECO:0000250" key="2">
    <source>
        <dbReference type="UniProtKB" id="P16286"/>
    </source>
</evidence>
<evidence type="ECO:0000256" key="3">
    <source>
        <dbReference type="SAM" id="MobiDB-lite"/>
    </source>
</evidence>
<evidence type="ECO:0000269" key="4">
    <source>
    </source>
</evidence>
<evidence type="ECO:0000269" key="5">
    <source>
    </source>
</evidence>
<evidence type="ECO:0000269" key="6">
    <source>
    </source>
</evidence>
<evidence type="ECO:0000269" key="7">
    <source>
    </source>
</evidence>
<evidence type="ECO:0000269" key="8">
    <source>
    </source>
</evidence>
<evidence type="ECO:0000269" key="9">
    <source>
    </source>
</evidence>
<evidence type="ECO:0000305" key="10"/>
<evidence type="ECO:0007829" key="11">
    <source>
        <dbReference type="PDB" id="1VYI"/>
    </source>
</evidence>
<evidence type="ECO:0007829" key="12">
    <source>
        <dbReference type="PDB" id="8B8V"/>
    </source>
</evidence>
<reference key="1">
    <citation type="journal article" date="1990" name="Nucleic Acids Res.">
        <title>Nucleotide and deduced amino acid sequences of the nominal nonstructural phosphoprotein of the ERA, PM and CVS-11 strains of rabies virus.</title>
        <authorList>
            <person name="Larson J.K."/>
            <person name="Wunner W.H."/>
        </authorList>
    </citation>
    <scope>NUCLEOTIDE SEQUENCE [GENOMIC RNA]</scope>
</reference>
<reference key="2">
    <citation type="submission" date="1991-01" db="EMBL/GenBank/DDBJ databases">
        <title>Nucleotide sequence of the NS gene of rabies virus CVS strain.</title>
        <authorList>
            <person name="Mannen K."/>
            <person name="Takita Y."/>
            <person name="Hiramatsu K."/>
            <person name="Mifune K."/>
        </authorList>
    </citation>
    <scope>NUCLEOTIDE SEQUENCE [GENOMIC RNA]</scope>
    <source>
        <strain>CVS</strain>
    </source>
</reference>
<reference key="3">
    <citation type="journal article" date="1998" name="J. Virol.">
        <title>Mapping the interacting domains between the rabies virus polymerase and phosphoprotein.</title>
        <authorList>
            <person name="Chenik M."/>
            <person name="Schnell M."/>
            <person name="Conzelmann K.K."/>
            <person name="Blondel D."/>
        </authorList>
    </citation>
    <scope>INTERACTION WITH PROTEIN L</scope>
</reference>
<reference key="4">
    <citation type="journal article" date="2005" name="J. Virol.">
        <title>Rabies virus P protein interacts with STAT1 and inhibits interferon signal transduction pathways.</title>
        <authorList>
            <person name="Vidy A."/>
            <person name="Chelbi-Alix M."/>
            <person name="Blondel D."/>
        </authorList>
    </citation>
    <scope>INTERACTION WITH HOST STAT1</scope>
</reference>
<reference key="5">
    <citation type="journal article" date="1995" name="J. Virol.">
        <title>Translation initiation at alternate in-frame AUG codons in the rabies virus phosphoprotein mRNA is mediated by a ribosomal leaky scanning mechanism.</title>
        <authorList>
            <person name="Chenik M."/>
            <person name="Chebli K."/>
            <person name="Blondel D."/>
        </authorList>
    </citation>
    <scope>ALTERNATIVE INITIATION</scope>
</reference>
<reference key="6">
    <citation type="journal article" date="2000" name="J. Virol.">
        <title>The phosphoprotein of rabies virus is phosphorylated by a unique cellular protein kinase and specific isomers of protein kinase C.</title>
        <authorList>
            <person name="Gupta A.K."/>
            <person name="Blondel D."/>
            <person name="Choudhary S."/>
            <person name="Banerjee A.K."/>
        </authorList>
    </citation>
    <scope>PHOSPHORYLATION AT SER-63; SER-64; SER-162; SER-210 AND SER-271</scope>
</reference>
<reference key="7">
    <citation type="journal article" date="2000" name="J. Virol.">
        <title>Interaction of the rabies virus P protein with the LC8 dynein light chain.</title>
        <authorList>
            <person name="Raux H."/>
            <person name="Flamand A."/>
            <person name="Blondel D."/>
        </authorList>
    </citation>
    <scope>INTERACTION WITH RAT DYNLL1 AND DYNLL2</scope>
</reference>
<reference key="8">
    <citation type="journal article" date="2001" name="J. Gen. Virol.">
        <title>Molecular basis for the interaction between rabies virus phosphoprotein P and the dynein light chain LC8: dissociation of dynein-binding properties and transcriptional functionality of P.</title>
        <authorList>
            <person name="Poisson N."/>
            <person name="Real E."/>
            <person name="Gaudin Y."/>
            <person name="Vaney M.C."/>
            <person name="King S."/>
            <person name="Jacob Y."/>
            <person name="Tordo N."/>
            <person name="Blondel D."/>
        </authorList>
    </citation>
    <scope>INTERACTION WITH RAT DYNLL1 AND DYNLL2</scope>
</reference>
<reference key="9">
    <citation type="journal article" date="2002" name="Oncogene">
        <title>Rabies virus P and small P products interact directly with PML and reorganize PML nuclear bodies.</title>
        <authorList>
            <person name="Blondel D."/>
            <person name="Regad T."/>
            <person name="Poisson N."/>
            <person name="Pavie B."/>
            <person name="Harper F."/>
            <person name="Pandolfi P.P."/>
            <person name="De The H."/>
            <person name="Chelbi-Alix M.K."/>
        </authorList>
    </citation>
    <scope>INTERACTION WITH HAMSTER PML</scope>
</reference>
<reference key="10">
    <citation type="journal article" date="2005" name="Virology">
        <title>Nucleocytoplasmic shuttling of the rabies virus P protein requires a nuclear localization signal and a CRM1-dependent nuclear export signal.</title>
        <authorList>
            <person name="Pasdeloup D."/>
            <person name="Poisson N."/>
            <person name="Raux H."/>
            <person name="Gaudin Y."/>
            <person name="Ruigrok R.W."/>
            <person name="Blondel D."/>
        </authorList>
    </citation>
    <scope>SUBCELLULAR LOCATION</scope>
</reference>
<reference key="11">
    <citation type="journal article" date="2007" name="J. Virol.">
        <title>The nucleocytoplasmic rabies virus P protein counteracts interferon signaling by inhibiting both nuclear accumulation and DNA binding of STAT1.</title>
        <authorList>
            <person name="Vidy A."/>
            <person name="El Bougrini J."/>
            <person name="Chelbi-Alix M.K."/>
            <person name="Blondel D."/>
        </authorList>
    </citation>
    <scope>INTERFERON ANTIVIRAL SYSTEM EVASION</scope>
</reference>
<reference key="12">
    <citation type="journal article" date="2004" name="J. Mol. Biol.">
        <title>Structure and function of the C-terminal domain of the polymerase cofactor of rabies virus.</title>
        <authorList>
            <person name="Mavrakis M."/>
            <person name="McCarthy A.A."/>
            <person name="Roche S."/>
            <person name="Blondel D."/>
            <person name="Ruigrok R.W."/>
        </authorList>
    </citation>
    <scope>X-RAY CRYSTALLOGRAPHY (1.5 ANGSTROMS) OF 186-297</scope>
</reference>
<gene>
    <name type="primary">P</name>
</gene>
<protein>
    <recommendedName>
        <fullName>Phosphoprotein</fullName>
        <shortName>Protein P</shortName>
    </recommendedName>
    <alternativeName>
        <fullName>Protein M1</fullName>
    </alternativeName>
</protein>